<sequence length="58" mass="6672">VMNLWPGVRLRVTEGWDEDGHHSEESLHYEGRAVDITTSDRDRNKYAMLARLAVEAAF</sequence>
<organism>
    <name type="scientific">Devario pathirana</name>
    <name type="common">Barred danio</name>
    <name type="synonym">Danio pathirana</name>
    <dbReference type="NCBI Taxonomy" id="46779"/>
    <lineage>
        <taxon>Eukaryota</taxon>
        <taxon>Metazoa</taxon>
        <taxon>Chordata</taxon>
        <taxon>Craniata</taxon>
        <taxon>Vertebrata</taxon>
        <taxon>Euteleostomi</taxon>
        <taxon>Actinopterygii</taxon>
        <taxon>Neopterygii</taxon>
        <taxon>Teleostei</taxon>
        <taxon>Ostariophysi</taxon>
        <taxon>Cypriniformes</taxon>
        <taxon>Danionidae</taxon>
        <taxon>Danioninae</taxon>
        <taxon>Devario</taxon>
    </lineage>
</organism>
<proteinExistence type="inferred from homology"/>
<reference key="1">
    <citation type="journal article" date="1996" name="Proc. Natl. Acad. Sci. U.S.A.">
        <title>Evolutionary analyses of hedgehog and Hoxd-10 genes in fish species closely related to the zebrafish.</title>
        <authorList>
            <person name="Zardoya R."/>
            <person name="Abouheif E."/>
            <person name="Meyer A."/>
        </authorList>
    </citation>
    <scope>NUCLEOTIDE SEQUENCE [GENOMIC DNA]</scope>
    <source>
        <tissue>Muscle</tissue>
    </source>
</reference>
<dbReference type="EMBL" id="U51379">
    <property type="protein sequence ID" value="AAB38607.1"/>
    <property type="molecule type" value="Genomic_DNA"/>
</dbReference>
<dbReference type="SMR" id="O13220"/>
<dbReference type="GO" id="GO:0005615">
    <property type="term" value="C:extracellular space"/>
    <property type="evidence" value="ECO:0007669"/>
    <property type="project" value="TreeGrafter"/>
</dbReference>
<dbReference type="GO" id="GO:0005886">
    <property type="term" value="C:plasma membrane"/>
    <property type="evidence" value="ECO:0007669"/>
    <property type="project" value="UniProtKB-SubCell"/>
</dbReference>
<dbReference type="GO" id="GO:0005509">
    <property type="term" value="F:calcium ion binding"/>
    <property type="evidence" value="ECO:0007669"/>
    <property type="project" value="TreeGrafter"/>
</dbReference>
<dbReference type="GO" id="GO:0005113">
    <property type="term" value="F:patched binding"/>
    <property type="evidence" value="ECO:0007669"/>
    <property type="project" value="TreeGrafter"/>
</dbReference>
<dbReference type="GO" id="GO:0008233">
    <property type="term" value="F:peptidase activity"/>
    <property type="evidence" value="ECO:0007669"/>
    <property type="project" value="UniProtKB-KW"/>
</dbReference>
<dbReference type="GO" id="GO:0001708">
    <property type="term" value="P:cell fate specification"/>
    <property type="evidence" value="ECO:0007669"/>
    <property type="project" value="TreeGrafter"/>
</dbReference>
<dbReference type="GO" id="GO:0007267">
    <property type="term" value="P:cell-cell signaling"/>
    <property type="evidence" value="ECO:0007669"/>
    <property type="project" value="InterPro"/>
</dbReference>
<dbReference type="GO" id="GO:0006508">
    <property type="term" value="P:proteolysis"/>
    <property type="evidence" value="ECO:0007669"/>
    <property type="project" value="UniProtKB-KW"/>
</dbReference>
<dbReference type="GO" id="GO:0010468">
    <property type="term" value="P:regulation of gene expression"/>
    <property type="evidence" value="ECO:0007669"/>
    <property type="project" value="TreeGrafter"/>
</dbReference>
<dbReference type="GO" id="GO:0007224">
    <property type="term" value="P:smoothened signaling pathway"/>
    <property type="evidence" value="ECO:0007669"/>
    <property type="project" value="TreeGrafter"/>
</dbReference>
<dbReference type="Gene3D" id="3.30.1380.10">
    <property type="match status" value="1"/>
</dbReference>
<dbReference type="InterPro" id="IPR001657">
    <property type="entry name" value="Hedgehog"/>
</dbReference>
<dbReference type="InterPro" id="IPR009045">
    <property type="entry name" value="Hedgehog_sig/DD-Pept_Zn-bd_sf"/>
</dbReference>
<dbReference type="InterPro" id="IPR050387">
    <property type="entry name" value="Hedgehog_Signaling"/>
</dbReference>
<dbReference type="InterPro" id="IPR000320">
    <property type="entry name" value="Hedgehog_signalling_dom"/>
</dbReference>
<dbReference type="PANTHER" id="PTHR11889">
    <property type="entry name" value="HEDGEHOG"/>
    <property type="match status" value="1"/>
</dbReference>
<dbReference type="PANTHER" id="PTHR11889:SF39">
    <property type="entry name" value="INDIAN HEDGEHOG PROTEIN"/>
    <property type="match status" value="1"/>
</dbReference>
<dbReference type="Pfam" id="PF01085">
    <property type="entry name" value="HH_signal"/>
    <property type="match status" value="1"/>
</dbReference>
<dbReference type="PRINTS" id="PR00632">
    <property type="entry name" value="SONICHHOG"/>
</dbReference>
<dbReference type="SUPFAM" id="SSF55166">
    <property type="entry name" value="Hedgehog/DD-peptidase"/>
    <property type="match status" value="1"/>
</dbReference>
<feature type="chain" id="PRO_0000058745" description="Indian hedgehog protein">
    <location>
        <begin position="1" status="less than"/>
        <end position="58" status="greater than"/>
    </location>
</feature>
<feature type="binding site" evidence="2">
    <location>
        <position position="13"/>
    </location>
    <ligand>
        <name>Ca(2+)</name>
        <dbReference type="ChEBI" id="CHEBI:29108"/>
        <label>1</label>
    </ligand>
</feature>
<feature type="binding site" evidence="2">
    <location>
        <position position="14"/>
    </location>
    <ligand>
        <name>Ca(2+)</name>
        <dbReference type="ChEBI" id="CHEBI:29108"/>
        <label>1</label>
    </ligand>
</feature>
<feature type="binding site" evidence="2">
    <location>
        <position position="14"/>
    </location>
    <ligand>
        <name>Ca(2+)</name>
        <dbReference type="ChEBI" id="CHEBI:29108"/>
        <label>2</label>
    </ligand>
</feature>
<feature type="binding site" evidence="2">
    <location>
        <position position="17"/>
    </location>
    <ligand>
        <name>Ca(2+)</name>
        <dbReference type="ChEBI" id="CHEBI:29108"/>
        <label>2</label>
    </ligand>
</feature>
<feature type="binding site" evidence="2">
    <location>
        <position position="19"/>
    </location>
    <ligand>
        <name>Ca(2+)</name>
        <dbReference type="ChEBI" id="CHEBI:29108"/>
        <label>2</label>
    </ligand>
</feature>
<feature type="binding site" evidence="2">
    <location>
        <position position="28"/>
    </location>
    <ligand>
        <name>Zn(2+)</name>
        <dbReference type="ChEBI" id="CHEBI:29105"/>
    </ligand>
</feature>
<feature type="binding site" evidence="2">
    <location>
        <position position="35"/>
    </location>
    <ligand>
        <name>Zn(2+)</name>
        <dbReference type="ChEBI" id="CHEBI:29105"/>
    </ligand>
</feature>
<feature type="non-terminal residue">
    <location>
        <position position="1"/>
    </location>
</feature>
<feature type="non-terminal residue">
    <location>
        <position position="58"/>
    </location>
</feature>
<evidence type="ECO:0000250" key="1"/>
<evidence type="ECO:0000250" key="2">
    <source>
        <dbReference type="UniProtKB" id="Q14623"/>
    </source>
</evidence>
<evidence type="ECO:0000305" key="3"/>
<name>IHH_DEVPA</name>
<comment type="function">
    <text evidence="1">Intercellular signal essential for a variety of patterning events during development.</text>
</comment>
<comment type="subcellular location">
    <subcellularLocation>
        <location evidence="1">Cell membrane</location>
    </subcellularLocation>
    <subcellularLocation>
        <location evidence="1">Secreted</location>
        <location evidence="1">Extracellular space</location>
    </subcellularLocation>
    <text evidence="1">Indian hedgehog protein N-product: Cell membrane; Lipid-anchor; Extracellular side. The N-terminal peptide remains associated with the cell surface. Indian hedgehog protein C-product: Secreted, extracellular space. The C-terminal peptide diffuses from the cell.</text>
</comment>
<comment type="domain">
    <text evidence="1">The indian hedgehog protein N-product binds calcium and zinc ions; this stabilizes the protein fold and is essential for protein-protein interactions mediated by this domain.</text>
</comment>
<comment type="PTM">
    <text evidence="1">The C-terminal domain displays an autoproteolysis activity and a cholesterol transferase activity. Both activities result in the cleavage of the full-length protein and covalent attachment of a cholesterol moiety to the C-terminal of the newly generated N-terminal fragment (N-product). The N-product is the active species in both local and long-range signaling, whereas the C-product has no signaling activity (By similarity).</text>
</comment>
<comment type="PTM">
    <text evidence="1">Cholesterylation is required for N-product targeting to lipid rafts and multimerization.</text>
</comment>
<comment type="PTM">
    <text evidence="1">N-palmitoylation is required for N-product multimerization and full activity.</text>
</comment>
<comment type="similarity">
    <text evidence="3">Belongs to the hedgehog family.</text>
</comment>
<accession>O13220</accession>
<gene>
    <name type="primary">ihh</name>
</gene>
<keyword id="KW-0068">Autocatalytic cleavage</keyword>
<keyword id="KW-0106">Calcium</keyword>
<keyword id="KW-1003">Cell membrane</keyword>
<keyword id="KW-0217">Developmental protein</keyword>
<keyword id="KW-0378">Hydrolase</keyword>
<keyword id="KW-0449">Lipoprotein</keyword>
<keyword id="KW-0472">Membrane</keyword>
<keyword id="KW-0479">Metal-binding</keyword>
<keyword id="KW-0564">Palmitate</keyword>
<keyword id="KW-0645">Protease</keyword>
<keyword id="KW-0964">Secreted</keyword>
<keyword id="KW-0862">Zinc</keyword>
<protein>
    <recommendedName>
        <fullName>Indian hedgehog protein</fullName>
        <shortName>IHH</shortName>
    </recommendedName>
</protein>